<comment type="function">
    <text evidence="1">Forms oxaloacetate, a four-carbon dicarboxylic acid source for the tricarboxylic acid cycle.</text>
</comment>
<comment type="catalytic activity">
    <reaction evidence="1">
        <text>oxaloacetate + phosphate = phosphoenolpyruvate + hydrogencarbonate</text>
        <dbReference type="Rhea" id="RHEA:28370"/>
        <dbReference type="ChEBI" id="CHEBI:16452"/>
        <dbReference type="ChEBI" id="CHEBI:17544"/>
        <dbReference type="ChEBI" id="CHEBI:43474"/>
        <dbReference type="ChEBI" id="CHEBI:58702"/>
        <dbReference type="EC" id="4.1.1.31"/>
    </reaction>
</comment>
<comment type="cofactor">
    <cofactor evidence="1">
        <name>Mg(2+)</name>
        <dbReference type="ChEBI" id="CHEBI:18420"/>
    </cofactor>
</comment>
<comment type="similarity">
    <text evidence="1">Belongs to the PEPCase type 1 family.</text>
</comment>
<gene>
    <name evidence="1" type="primary">ppc</name>
    <name type="ordered locus">PputGB1_1110</name>
</gene>
<reference key="1">
    <citation type="submission" date="2008-01" db="EMBL/GenBank/DDBJ databases">
        <title>Complete sequence of Pseudomonas putida GB-1.</title>
        <authorList>
            <consortium name="US DOE Joint Genome Institute"/>
            <person name="Copeland A."/>
            <person name="Lucas S."/>
            <person name="Lapidus A."/>
            <person name="Barry K."/>
            <person name="Glavina del Rio T."/>
            <person name="Dalin E."/>
            <person name="Tice H."/>
            <person name="Pitluck S."/>
            <person name="Bruce D."/>
            <person name="Goodwin L."/>
            <person name="Chertkov O."/>
            <person name="Brettin T."/>
            <person name="Detter J.C."/>
            <person name="Han C."/>
            <person name="Kuske C.R."/>
            <person name="Schmutz J."/>
            <person name="Larimer F."/>
            <person name="Land M."/>
            <person name="Hauser L."/>
            <person name="Kyrpides N."/>
            <person name="Kim E."/>
            <person name="McCarthy J.K."/>
            <person name="Richardson P."/>
        </authorList>
    </citation>
    <scope>NUCLEOTIDE SEQUENCE [LARGE SCALE GENOMIC DNA]</scope>
    <source>
        <strain>GB-1</strain>
    </source>
</reference>
<dbReference type="EC" id="4.1.1.31" evidence="1"/>
<dbReference type="EMBL" id="CP000926">
    <property type="protein sequence ID" value="ABY97018.1"/>
    <property type="molecule type" value="Genomic_DNA"/>
</dbReference>
<dbReference type="RefSeq" id="WP_012270799.1">
    <property type="nucleotide sequence ID" value="NC_010322.1"/>
</dbReference>
<dbReference type="SMR" id="B0KS63"/>
<dbReference type="KEGG" id="ppg:PputGB1_1110"/>
<dbReference type="eggNOG" id="COG2352">
    <property type="taxonomic scope" value="Bacteria"/>
</dbReference>
<dbReference type="HOGENOM" id="CLU_006557_2_0_6"/>
<dbReference type="Proteomes" id="UP000002157">
    <property type="component" value="Chromosome"/>
</dbReference>
<dbReference type="GO" id="GO:0005829">
    <property type="term" value="C:cytosol"/>
    <property type="evidence" value="ECO:0007669"/>
    <property type="project" value="TreeGrafter"/>
</dbReference>
<dbReference type="GO" id="GO:0000287">
    <property type="term" value="F:magnesium ion binding"/>
    <property type="evidence" value="ECO:0007669"/>
    <property type="project" value="UniProtKB-UniRule"/>
</dbReference>
<dbReference type="GO" id="GO:0008964">
    <property type="term" value="F:phosphoenolpyruvate carboxylase activity"/>
    <property type="evidence" value="ECO:0007669"/>
    <property type="project" value="UniProtKB-UniRule"/>
</dbReference>
<dbReference type="GO" id="GO:0015977">
    <property type="term" value="P:carbon fixation"/>
    <property type="evidence" value="ECO:0007669"/>
    <property type="project" value="UniProtKB-UniRule"/>
</dbReference>
<dbReference type="GO" id="GO:0006107">
    <property type="term" value="P:oxaloacetate metabolic process"/>
    <property type="evidence" value="ECO:0007669"/>
    <property type="project" value="UniProtKB-UniRule"/>
</dbReference>
<dbReference type="GO" id="GO:0006099">
    <property type="term" value="P:tricarboxylic acid cycle"/>
    <property type="evidence" value="ECO:0007669"/>
    <property type="project" value="InterPro"/>
</dbReference>
<dbReference type="Gene3D" id="1.20.1440.90">
    <property type="entry name" value="Phosphoenolpyruvate/pyruvate domain"/>
    <property type="match status" value="1"/>
</dbReference>
<dbReference type="HAMAP" id="MF_00595">
    <property type="entry name" value="PEPcase_type1"/>
    <property type="match status" value="1"/>
</dbReference>
<dbReference type="InterPro" id="IPR021135">
    <property type="entry name" value="PEP_COase"/>
</dbReference>
<dbReference type="InterPro" id="IPR022805">
    <property type="entry name" value="PEP_COase_bac/pln-type"/>
</dbReference>
<dbReference type="InterPro" id="IPR018129">
    <property type="entry name" value="PEP_COase_Lys_AS"/>
</dbReference>
<dbReference type="InterPro" id="IPR033129">
    <property type="entry name" value="PEPCASE_His_AS"/>
</dbReference>
<dbReference type="InterPro" id="IPR015813">
    <property type="entry name" value="Pyrv/PenolPyrv_kinase-like_dom"/>
</dbReference>
<dbReference type="NCBIfam" id="NF000584">
    <property type="entry name" value="PRK00009.1"/>
    <property type="match status" value="1"/>
</dbReference>
<dbReference type="PANTHER" id="PTHR30523">
    <property type="entry name" value="PHOSPHOENOLPYRUVATE CARBOXYLASE"/>
    <property type="match status" value="1"/>
</dbReference>
<dbReference type="PANTHER" id="PTHR30523:SF6">
    <property type="entry name" value="PHOSPHOENOLPYRUVATE CARBOXYLASE"/>
    <property type="match status" value="1"/>
</dbReference>
<dbReference type="Pfam" id="PF00311">
    <property type="entry name" value="PEPcase"/>
    <property type="match status" value="1"/>
</dbReference>
<dbReference type="PRINTS" id="PR00150">
    <property type="entry name" value="PEPCARBXLASE"/>
</dbReference>
<dbReference type="SUPFAM" id="SSF51621">
    <property type="entry name" value="Phosphoenolpyruvate/pyruvate domain"/>
    <property type="match status" value="1"/>
</dbReference>
<dbReference type="PROSITE" id="PS00781">
    <property type="entry name" value="PEPCASE_1"/>
    <property type="match status" value="1"/>
</dbReference>
<dbReference type="PROSITE" id="PS00393">
    <property type="entry name" value="PEPCASE_2"/>
    <property type="match status" value="1"/>
</dbReference>
<evidence type="ECO:0000255" key="1">
    <source>
        <dbReference type="HAMAP-Rule" id="MF_00595"/>
    </source>
</evidence>
<name>CAPP_PSEPG</name>
<sequence>MTDIDVRLREDVHVLGELLGETIRQQHGDAFLQKIEDIRHSAKADRRGPGEQLSSTLADLAEDDLLPVARAFNQFLNLANMAEQYQLIRRRDADQPEPFEARVLPELLARLKQAGHSNDALARQLAKLDIQLVLTAHPTEVARRTLIQKYDAIAGQLAAQDHRDLSPAERQQVRERLRRLIAEAWHTEEIRRTRPTPVDEAKWGFAVIEHSLWHAIPSHLRKVDKALLEATGLRLPLEAAPIRFASWMGGDRDGNPNVTAAVTREVLLLARWMAADLFLRDIDALAAELSMQQANDALRERVGDSAEPYRAVLKQLRDRLRATRAWAHSALASNQPAGAEVLVDNRDLIAPLELCYQSLHDCGMGVIAEGPLLDCLRRAVTFGLFLGRLDVRQDAARHRDALTEITDYLGLGRYADWDEEQRIGFLQAELKNRRPLLPAHFKPQADTAEVLATCREVAAAPAASLGSYVISMAGAASDVLAVQLLLKEAGLTRPMRVVPLFETLADLDNAGPVMQRLLGLPGYRAGLRGPQEVMIGYSDSAKDAGTTAAAWAQYRAQENLVRICAEHQVELLLFHGRGGTVGRGGGPAHAAILSQPPGSVAGRFRTTEQGEMIRFKFGLPGIAEQNLNLYLAAVLEATLLPPPPPQPAWRELMDQLAADGVKAYRSVVRENPDFVEYFRQSTPEQELGRLPLGSRPAKRRAGGIESLRAIPWIFGWTQTRLMLPAWLGWETALSNALARGQGELLAQMREQWPFFRTRIDMLEMVLAKADAQIAEAYDERLVQPHLLPLGAHLRDLLSQSCQVVLGLTGQPVLLAHSPETLEFISLRNTYLDPLHRLQAELLARSRSREAALDSPLEQALLVTVAGIAAGLRNTG</sequence>
<organism>
    <name type="scientific">Pseudomonas putida (strain GB-1)</name>
    <dbReference type="NCBI Taxonomy" id="76869"/>
    <lineage>
        <taxon>Bacteria</taxon>
        <taxon>Pseudomonadati</taxon>
        <taxon>Pseudomonadota</taxon>
        <taxon>Gammaproteobacteria</taxon>
        <taxon>Pseudomonadales</taxon>
        <taxon>Pseudomonadaceae</taxon>
        <taxon>Pseudomonas</taxon>
    </lineage>
</organism>
<feature type="chain" id="PRO_1000082430" description="Phosphoenolpyruvate carboxylase">
    <location>
        <begin position="1"/>
        <end position="875"/>
    </location>
</feature>
<feature type="active site" evidence="1">
    <location>
        <position position="137"/>
    </location>
</feature>
<feature type="active site" evidence="1">
    <location>
        <position position="542"/>
    </location>
</feature>
<protein>
    <recommendedName>
        <fullName evidence="1">Phosphoenolpyruvate carboxylase</fullName>
        <shortName evidence="1">PEPC</shortName>
        <shortName evidence="1">PEPCase</shortName>
        <ecNumber evidence="1">4.1.1.31</ecNumber>
    </recommendedName>
</protein>
<proteinExistence type="inferred from homology"/>
<keyword id="KW-0120">Carbon dioxide fixation</keyword>
<keyword id="KW-0456">Lyase</keyword>
<keyword id="KW-0460">Magnesium</keyword>
<accession>B0KS63</accession>